<accession>P0C9Y8</accession>
<proteinExistence type="inferred from homology"/>
<organismHost>
    <name type="scientific">Ornithodoros</name>
    <name type="common">relapsing fever ticks</name>
    <dbReference type="NCBI Taxonomy" id="6937"/>
</organismHost>
<organismHost>
    <name type="scientific">Phacochoerus aethiopicus</name>
    <name type="common">Warthog</name>
    <dbReference type="NCBI Taxonomy" id="85517"/>
</organismHost>
<organismHost>
    <name type="scientific">Phacochoerus africanus</name>
    <name type="common">Warthog</name>
    <dbReference type="NCBI Taxonomy" id="41426"/>
</organismHost>
<organismHost>
    <name type="scientific">Potamochoerus larvatus</name>
    <name type="common">Bushpig</name>
    <dbReference type="NCBI Taxonomy" id="273792"/>
</organismHost>
<organismHost>
    <name type="scientific">Sus scrofa</name>
    <name type="common">Pig</name>
    <dbReference type="NCBI Taxonomy" id="9823"/>
</organismHost>
<comment type="function">
    <text evidence="1">Together with the penton and the other minor capsid proteins (M1249L, p49), forms a complicated network immediately below the outer capsid shell, stabilizing the whole capsid. Three copies of p17 encircle each p72 capsomer in the inner capsid shell, anchoring p72 capsomers on the inner membrane. Required for the assembly of the capsid and icosahedral morphogenesis. Additionally, inhibits the host cGAS-STING pathway through its interaction with STING1 and subsequent interference of the recruitment of downstream components TBK1 and IKBKE.</text>
</comment>
<comment type="subunit">
    <text evidence="1">Interacts with the minor capsid protein M1249L and with the hexon capsid protein p72 capsomers; these interactions form a rigid zipper structure that stabilizes the capsomers. Interacts with host STING1.</text>
</comment>
<comment type="subcellular location">
    <subcellularLocation>
        <location evidence="1">Virion membrane</location>
        <topology evidence="2">Single-pass membrane protein</topology>
    </subcellularLocation>
    <subcellularLocation>
        <location evidence="1">Host endoplasmic reticulum membrane</location>
        <topology evidence="2">Single-pass membrane protein</topology>
    </subcellularLocation>
    <text>Found in the inner envelope of the virus.</text>
</comment>
<comment type="induction">
    <text evidence="4">Expressed in the late phase of the viral replicative cycle.</text>
</comment>
<comment type="similarity">
    <text evidence="4">Belongs to the asfivirus minor capsid protein p17 family.</text>
</comment>
<sequence>MDTETSPLLSHNLSTREGIKQSTQGFLAHTIARHPGITAIILGILILLVIILIVVAIVYYNRSVDCKSTMPKLPPPGYYVQQPEPHHHFPVFFRKRKNSTTQQHIPSDEQLAELAHS</sequence>
<organism>
    <name type="scientific">African swine fever virus (isolate Pig/Kenya/KEN-50/1950)</name>
    <name type="common">ASFV</name>
    <dbReference type="NCBI Taxonomy" id="561445"/>
    <lineage>
        <taxon>Viruses</taxon>
        <taxon>Varidnaviria</taxon>
        <taxon>Bamfordvirae</taxon>
        <taxon>Nucleocytoviricota</taxon>
        <taxon>Pokkesviricetes</taxon>
        <taxon>Asfuvirales</taxon>
        <taxon>Asfarviridae</taxon>
        <taxon>Asfivirus</taxon>
        <taxon>African swine fever virus</taxon>
    </lineage>
</organism>
<reference key="1">
    <citation type="submission" date="2003-03" db="EMBL/GenBank/DDBJ databases">
        <title>African swine fever virus genomes.</title>
        <authorList>
            <person name="Kutish G.F."/>
            <person name="Rock D.L."/>
        </authorList>
    </citation>
    <scope>NUCLEOTIDE SEQUENCE [LARGE SCALE GENOMIC DNA]</scope>
</reference>
<feature type="chain" id="PRO_0000373402" description="Minor capsid protein p17">
    <location>
        <begin position="1"/>
        <end position="117"/>
    </location>
</feature>
<feature type="transmembrane region" description="Helical" evidence="2">
    <location>
        <begin position="39"/>
        <end position="59"/>
    </location>
</feature>
<feature type="region of interest" description="Disordered" evidence="3">
    <location>
        <begin position="97"/>
        <end position="117"/>
    </location>
</feature>
<feature type="glycosylation site" description="N-linked (GlcNAc...) asparagine; by host" evidence="2">
    <location>
        <position position="12"/>
    </location>
</feature>
<feature type="glycosylation site" description="N-linked (GlcNAc...) asparagine; by host" evidence="2">
    <location>
        <position position="61"/>
    </location>
</feature>
<feature type="glycosylation site" description="N-linked (GlcNAc...) asparagine; by host" evidence="2">
    <location>
        <position position="98"/>
    </location>
</feature>
<protein>
    <recommendedName>
        <fullName evidence="1">Minor capsid protein p17</fullName>
    </recommendedName>
</protein>
<dbReference type="EMBL" id="AY261360">
    <property type="status" value="NOT_ANNOTATED_CDS"/>
    <property type="molecule type" value="Genomic_DNA"/>
</dbReference>
<dbReference type="SMR" id="P0C9Y8"/>
<dbReference type="Proteomes" id="UP000000861">
    <property type="component" value="Segment"/>
</dbReference>
<dbReference type="GO" id="GO:0044167">
    <property type="term" value="C:host cell endoplasmic reticulum membrane"/>
    <property type="evidence" value="ECO:0007669"/>
    <property type="project" value="UniProtKB-SubCell"/>
</dbReference>
<dbReference type="GO" id="GO:0016020">
    <property type="term" value="C:membrane"/>
    <property type="evidence" value="ECO:0007669"/>
    <property type="project" value="UniProtKB-KW"/>
</dbReference>
<dbReference type="GO" id="GO:0055036">
    <property type="term" value="C:virion membrane"/>
    <property type="evidence" value="ECO:0007669"/>
    <property type="project" value="UniProtKB-SubCell"/>
</dbReference>
<dbReference type="GO" id="GO:0052170">
    <property type="term" value="P:symbiont-mediated suppression of host innate immune response"/>
    <property type="evidence" value="ECO:0007669"/>
    <property type="project" value="UniProtKB-KW"/>
</dbReference>
<evidence type="ECO:0000250" key="1">
    <source>
        <dbReference type="UniProtKB" id="Q89424"/>
    </source>
</evidence>
<evidence type="ECO:0000255" key="2"/>
<evidence type="ECO:0000256" key="3">
    <source>
        <dbReference type="SAM" id="MobiDB-lite"/>
    </source>
</evidence>
<evidence type="ECO:0000305" key="4"/>
<keyword id="KW-0325">Glycoprotein</keyword>
<keyword id="KW-1038">Host endoplasmic reticulum</keyword>
<keyword id="KW-1043">Host membrane</keyword>
<keyword id="KW-0945">Host-virus interaction</keyword>
<keyword id="KW-1090">Inhibition of host innate immune response by virus</keyword>
<keyword id="KW-0472">Membrane</keyword>
<keyword id="KW-0812">Transmembrane</keyword>
<keyword id="KW-1133">Transmembrane helix</keyword>
<keyword id="KW-0899">Viral immunoevasion</keyword>
<keyword id="KW-0946">Virion</keyword>
<name>P17_ASFK5</name>
<gene>
    <name type="ordered locus">Ken-119</name>
</gene>